<evidence type="ECO:0000255" key="1">
    <source>
        <dbReference type="HAMAP-Rule" id="MF_00451"/>
    </source>
</evidence>
<keyword id="KW-0067">ATP-binding</keyword>
<keyword id="KW-0963">Cytoplasm</keyword>
<keyword id="KW-0418">Kinase</keyword>
<keyword id="KW-0460">Magnesium</keyword>
<keyword id="KW-0479">Metal-binding</keyword>
<keyword id="KW-0546">Nucleotide metabolism</keyword>
<keyword id="KW-0547">Nucleotide-binding</keyword>
<keyword id="KW-0597">Phosphoprotein</keyword>
<keyword id="KW-0808">Transferase</keyword>
<sequence length="137" mass="15159">MERTFAIIKPDAVERNVTGKVLAMIEEGGFKIVGMKKIRLSKCQAEGFYYVHKERPFFGDLCAFMSRGPVIALVLEKENAIADWRALMGATNPANAEAGTIRKALGVSIEENTVHGSDSPESASYEIPYFFNQLELV</sequence>
<protein>
    <recommendedName>
        <fullName evidence="1">Nucleoside diphosphate kinase</fullName>
        <shortName evidence="1">NDK</shortName>
        <shortName evidence="1">NDP kinase</shortName>
        <ecNumber evidence="1">2.7.4.6</ecNumber>
    </recommendedName>
    <alternativeName>
        <fullName evidence="1">Nucleoside-2-P kinase</fullName>
    </alternativeName>
</protein>
<proteinExistence type="inferred from homology"/>
<name>NDK_GEOSM</name>
<gene>
    <name evidence="1" type="primary">ndk</name>
    <name type="ordered locus">GM21_2559</name>
</gene>
<feature type="chain" id="PRO_1000206212" description="Nucleoside diphosphate kinase">
    <location>
        <begin position="1"/>
        <end position="137"/>
    </location>
</feature>
<feature type="active site" description="Pros-phosphohistidine intermediate" evidence="1">
    <location>
        <position position="115"/>
    </location>
</feature>
<feature type="binding site" evidence="1">
    <location>
        <position position="9"/>
    </location>
    <ligand>
        <name>ATP</name>
        <dbReference type="ChEBI" id="CHEBI:30616"/>
    </ligand>
</feature>
<feature type="binding site" evidence="1">
    <location>
        <position position="57"/>
    </location>
    <ligand>
        <name>ATP</name>
        <dbReference type="ChEBI" id="CHEBI:30616"/>
    </ligand>
</feature>
<feature type="binding site" evidence="1">
    <location>
        <position position="85"/>
    </location>
    <ligand>
        <name>ATP</name>
        <dbReference type="ChEBI" id="CHEBI:30616"/>
    </ligand>
</feature>
<feature type="binding site" evidence="1">
    <location>
        <position position="91"/>
    </location>
    <ligand>
        <name>ATP</name>
        <dbReference type="ChEBI" id="CHEBI:30616"/>
    </ligand>
</feature>
<feature type="binding site" evidence="1">
    <location>
        <position position="102"/>
    </location>
    <ligand>
        <name>ATP</name>
        <dbReference type="ChEBI" id="CHEBI:30616"/>
    </ligand>
</feature>
<feature type="binding site" evidence="1">
    <location>
        <position position="112"/>
    </location>
    <ligand>
        <name>ATP</name>
        <dbReference type="ChEBI" id="CHEBI:30616"/>
    </ligand>
</feature>
<comment type="function">
    <text evidence="1">Major role in the synthesis of nucleoside triphosphates other than ATP. The ATP gamma phosphate is transferred to the NDP beta phosphate via a ping-pong mechanism, using a phosphorylated active-site intermediate.</text>
</comment>
<comment type="catalytic activity">
    <reaction evidence="1">
        <text>a 2'-deoxyribonucleoside 5'-diphosphate + ATP = a 2'-deoxyribonucleoside 5'-triphosphate + ADP</text>
        <dbReference type="Rhea" id="RHEA:44640"/>
        <dbReference type="ChEBI" id="CHEBI:30616"/>
        <dbReference type="ChEBI" id="CHEBI:61560"/>
        <dbReference type="ChEBI" id="CHEBI:73316"/>
        <dbReference type="ChEBI" id="CHEBI:456216"/>
        <dbReference type="EC" id="2.7.4.6"/>
    </reaction>
</comment>
<comment type="catalytic activity">
    <reaction evidence="1">
        <text>a ribonucleoside 5'-diphosphate + ATP = a ribonucleoside 5'-triphosphate + ADP</text>
        <dbReference type="Rhea" id="RHEA:18113"/>
        <dbReference type="ChEBI" id="CHEBI:30616"/>
        <dbReference type="ChEBI" id="CHEBI:57930"/>
        <dbReference type="ChEBI" id="CHEBI:61557"/>
        <dbReference type="ChEBI" id="CHEBI:456216"/>
        <dbReference type="EC" id="2.7.4.6"/>
    </reaction>
</comment>
<comment type="cofactor">
    <cofactor evidence="1">
        <name>Mg(2+)</name>
        <dbReference type="ChEBI" id="CHEBI:18420"/>
    </cofactor>
</comment>
<comment type="subunit">
    <text evidence="1">Homotetramer.</text>
</comment>
<comment type="subcellular location">
    <subcellularLocation>
        <location evidence="1">Cytoplasm</location>
    </subcellularLocation>
</comment>
<comment type="similarity">
    <text evidence="1">Belongs to the NDK family.</text>
</comment>
<organism>
    <name type="scientific">Geobacter sp. (strain M21)</name>
    <dbReference type="NCBI Taxonomy" id="443144"/>
    <lineage>
        <taxon>Bacteria</taxon>
        <taxon>Pseudomonadati</taxon>
        <taxon>Thermodesulfobacteriota</taxon>
        <taxon>Desulfuromonadia</taxon>
        <taxon>Geobacterales</taxon>
        <taxon>Geobacteraceae</taxon>
        <taxon>Geobacter</taxon>
    </lineage>
</organism>
<reference key="1">
    <citation type="submission" date="2009-07" db="EMBL/GenBank/DDBJ databases">
        <title>Complete sequence of Geobacter sp. M21.</title>
        <authorList>
            <consortium name="US DOE Joint Genome Institute"/>
            <person name="Lucas S."/>
            <person name="Copeland A."/>
            <person name="Lapidus A."/>
            <person name="Glavina del Rio T."/>
            <person name="Dalin E."/>
            <person name="Tice H."/>
            <person name="Bruce D."/>
            <person name="Goodwin L."/>
            <person name="Pitluck S."/>
            <person name="Saunders E."/>
            <person name="Brettin T."/>
            <person name="Detter J.C."/>
            <person name="Han C."/>
            <person name="Larimer F."/>
            <person name="Land M."/>
            <person name="Hauser L."/>
            <person name="Kyrpides N."/>
            <person name="Ovchinnikova G."/>
            <person name="Lovley D."/>
        </authorList>
    </citation>
    <scope>NUCLEOTIDE SEQUENCE [LARGE SCALE GENOMIC DNA]</scope>
    <source>
        <strain>M21</strain>
    </source>
</reference>
<dbReference type="EC" id="2.7.4.6" evidence="1"/>
<dbReference type="EMBL" id="CP001661">
    <property type="protein sequence ID" value="ACT18600.1"/>
    <property type="molecule type" value="Genomic_DNA"/>
</dbReference>
<dbReference type="SMR" id="C6E0H6"/>
<dbReference type="STRING" id="443144.GM21_2559"/>
<dbReference type="KEGG" id="gem:GM21_2559"/>
<dbReference type="eggNOG" id="COG0105">
    <property type="taxonomic scope" value="Bacteria"/>
</dbReference>
<dbReference type="HOGENOM" id="CLU_060216_8_1_7"/>
<dbReference type="OrthoDB" id="9801161at2"/>
<dbReference type="GO" id="GO:0005737">
    <property type="term" value="C:cytoplasm"/>
    <property type="evidence" value="ECO:0007669"/>
    <property type="project" value="UniProtKB-SubCell"/>
</dbReference>
<dbReference type="GO" id="GO:0005524">
    <property type="term" value="F:ATP binding"/>
    <property type="evidence" value="ECO:0007669"/>
    <property type="project" value="UniProtKB-UniRule"/>
</dbReference>
<dbReference type="GO" id="GO:0046872">
    <property type="term" value="F:metal ion binding"/>
    <property type="evidence" value="ECO:0007669"/>
    <property type="project" value="UniProtKB-KW"/>
</dbReference>
<dbReference type="GO" id="GO:0004550">
    <property type="term" value="F:nucleoside diphosphate kinase activity"/>
    <property type="evidence" value="ECO:0007669"/>
    <property type="project" value="UniProtKB-UniRule"/>
</dbReference>
<dbReference type="GO" id="GO:0006241">
    <property type="term" value="P:CTP biosynthetic process"/>
    <property type="evidence" value="ECO:0007669"/>
    <property type="project" value="UniProtKB-UniRule"/>
</dbReference>
<dbReference type="GO" id="GO:0006183">
    <property type="term" value="P:GTP biosynthetic process"/>
    <property type="evidence" value="ECO:0007669"/>
    <property type="project" value="UniProtKB-UniRule"/>
</dbReference>
<dbReference type="GO" id="GO:0006228">
    <property type="term" value="P:UTP biosynthetic process"/>
    <property type="evidence" value="ECO:0007669"/>
    <property type="project" value="UniProtKB-UniRule"/>
</dbReference>
<dbReference type="CDD" id="cd04413">
    <property type="entry name" value="NDPk_I"/>
    <property type="match status" value="1"/>
</dbReference>
<dbReference type="FunFam" id="3.30.70.141:FF:000003">
    <property type="entry name" value="Nucleoside diphosphate kinase"/>
    <property type="match status" value="1"/>
</dbReference>
<dbReference type="Gene3D" id="3.30.70.141">
    <property type="entry name" value="Nucleoside diphosphate kinase-like domain"/>
    <property type="match status" value="1"/>
</dbReference>
<dbReference type="HAMAP" id="MF_00451">
    <property type="entry name" value="NDP_kinase"/>
    <property type="match status" value="1"/>
</dbReference>
<dbReference type="InterPro" id="IPR034907">
    <property type="entry name" value="NDK-like_dom"/>
</dbReference>
<dbReference type="InterPro" id="IPR036850">
    <property type="entry name" value="NDK-like_dom_sf"/>
</dbReference>
<dbReference type="InterPro" id="IPR001564">
    <property type="entry name" value="Nucleoside_diP_kinase"/>
</dbReference>
<dbReference type="InterPro" id="IPR023005">
    <property type="entry name" value="Nucleoside_diP_kinase_AS"/>
</dbReference>
<dbReference type="NCBIfam" id="NF001908">
    <property type="entry name" value="PRK00668.1"/>
    <property type="match status" value="1"/>
</dbReference>
<dbReference type="PANTHER" id="PTHR46161">
    <property type="entry name" value="NUCLEOSIDE DIPHOSPHATE KINASE"/>
    <property type="match status" value="1"/>
</dbReference>
<dbReference type="PANTHER" id="PTHR46161:SF3">
    <property type="entry name" value="NUCLEOSIDE DIPHOSPHATE KINASE DDB_G0292928-RELATED"/>
    <property type="match status" value="1"/>
</dbReference>
<dbReference type="Pfam" id="PF00334">
    <property type="entry name" value="NDK"/>
    <property type="match status" value="1"/>
</dbReference>
<dbReference type="PRINTS" id="PR01243">
    <property type="entry name" value="NUCDPKINASE"/>
</dbReference>
<dbReference type="SMART" id="SM00562">
    <property type="entry name" value="NDK"/>
    <property type="match status" value="1"/>
</dbReference>
<dbReference type="SUPFAM" id="SSF54919">
    <property type="entry name" value="Nucleoside diphosphate kinase, NDK"/>
    <property type="match status" value="1"/>
</dbReference>
<dbReference type="PROSITE" id="PS00469">
    <property type="entry name" value="NDPK"/>
    <property type="match status" value="1"/>
</dbReference>
<dbReference type="PROSITE" id="PS51374">
    <property type="entry name" value="NDPK_LIKE"/>
    <property type="match status" value="1"/>
</dbReference>
<accession>C6E0H6</accession>